<protein>
    <recommendedName>
        <fullName evidence="2">Bottromycin D</fullName>
    </recommendedName>
</protein>
<feature type="initiator methionine" description="Removed" evidence="4">
    <location>
        <position position="1"/>
    </location>
</feature>
<feature type="chain" id="PRO_0000443309" description="Bottromycin D">
    <location>
        <begin position="2"/>
        <end position="9"/>
    </location>
</feature>
<feature type="propeptide" id="PRO_0000443310" evidence="4">
    <location>
        <begin position="10"/>
        <end position="46"/>
    </location>
</feature>
<feature type="mutagenesis site" description="Leads to the production of bottromycin A2 instead of bottromycin D." evidence="1">
    <original>A</original>
    <variation>V</variation>
    <location>
        <position position="4"/>
    </location>
</feature>
<proteinExistence type="evidence at protein level"/>
<dbReference type="EMBL" id="JX827389">
    <property type="protein sequence ID" value="AFU90404.1"/>
    <property type="molecule type" value="Genomic_DNA"/>
</dbReference>
<dbReference type="GO" id="GO:0005576">
    <property type="term" value="C:extracellular region"/>
    <property type="evidence" value="ECO:0007669"/>
    <property type="project" value="UniProtKB-SubCell"/>
</dbReference>
<dbReference type="GO" id="GO:0042742">
    <property type="term" value="P:defense response to bacterium"/>
    <property type="evidence" value="ECO:0007669"/>
    <property type="project" value="UniProtKB-KW"/>
</dbReference>
<dbReference type="NCBIfam" id="NF033414">
    <property type="entry name" value="bottro_RiPP"/>
    <property type="match status" value="1"/>
</dbReference>
<name>BSTA_STRSQ</name>
<comment type="function">
    <text evidence="1">Bottromycin D is a ribosomally synthesized and post-translationally modified peptide (RiPP) that displays antibiotic activity against methicillin-resistant S.aureus (MRSA).</text>
</comment>
<comment type="subcellular location">
    <subcellularLocation>
        <location evidence="3">Secreted</location>
    </subcellularLocation>
</comment>
<comment type="PTM">
    <text evidence="1">The precursor peptide is first ribosomally synthesized and then highly tailored by specific enzymes to yield the final natural product. These modifications include several methylations, cyclization and the formation of t-Leu and Thia-beta-Ala residues.</text>
</comment>
<comment type="mass spectrometry" mass="795.42" method="Electrospray" evidence="1"/>
<accession>K4JY29</accession>
<organism>
    <name type="scientific">Streptomyces sp</name>
    <dbReference type="NCBI Taxonomy" id="1931"/>
    <lineage>
        <taxon>Bacteria</taxon>
        <taxon>Bacillati</taxon>
        <taxon>Actinomycetota</taxon>
        <taxon>Actinomycetes</taxon>
        <taxon>Kitasatosporales</taxon>
        <taxon>Streptomycetaceae</taxon>
        <taxon>Streptomyces</taxon>
    </lineage>
</organism>
<evidence type="ECO:0000269" key="1">
    <source>
    </source>
</evidence>
<evidence type="ECO:0000303" key="2">
    <source>
    </source>
</evidence>
<evidence type="ECO:0000305" key="3"/>
<evidence type="ECO:0000305" key="4">
    <source>
    </source>
</evidence>
<reference key="1">
    <citation type="journal article" date="2012" name="Org. Lett.">
        <title>Structure and biosynthesis of the antibiotic bottromycin D.</title>
        <authorList>
            <person name="Hou Y."/>
            <person name="Tianero M.D."/>
            <person name="Kwan J.C."/>
            <person name="Wyche T.P."/>
            <person name="Michel C.R."/>
            <person name="Ellis G.A."/>
            <person name="Vazquez-Rivera E."/>
            <person name="Braun D.R."/>
            <person name="Rose W.E."/>
            <person name="Schmidt E.W."/>
            <person name="Bugni T.S."/>
        </authorList>
    </citation>
    <scope>NUCLEOTIDE SEQUENCE [GENOMIC DNA]</scope>
    <scope>FUNCTION</scope>
    <scope>DETERMINATION OF BOTTROMYCIN D STRUCTURE</scope>
    <scope>MASS SPECTROMETRY</scope>
    <scope>MUTAGENESIS OF ALA-4</scope>
    <source>
        <strain>WMMB 272</strain>
    </source>
</reference>
<gene>
    <name evidence="2" type="primary">bstA</name>
</gene>
<sequence length="46" mass="5083">MGPAVVFDCMTADFLNDDPNNAELSSLEMEELESWGAWSDDTDQSV</sequence>
<keyword id="KW-0044">Antibiotic</keyword>
<keyword id="KW-0929">Antimicrobial</keyword>
<keyword id="KW-0964">Secreted</keyword>